<proteinExistence type="evidence at protein level"/>
<comment type="function">
    <text evidence="1 4">Required for the proteolytic cleavage of the transcription factor RIM101 in response to alkaline ambient pH (By similarity). Required for growth at alkaline pH.</text>
</comment>
<comment type="subcellular location">
    <subcellularLocation>
        <location evidence="5">Cell membrane</location>
        <topology evidence="5">Multi-pass membrane protein</topology>
    </subcellularLocation>
</comment>
<comment type="similarity">
    <text evidence="5">Belongs to the palH/RIM21 family.</text>
</comment>
<keyword id="KW-1003">Cell membrane</keyword>
<keyword id="KW-0472">Membrane</keyword>
<keyword id="KW-0597">Phosphoprotein</keyword>
<keyword id="KW-1185">Reference proteome</keyword>
<keyword id="KW-0812">Transmembrane</keyword>
<keyword id="KW-1133">Transmembrane helix</keyword>
<protein>
    <recommendedName>
        <fullName>pH-response regulator protein palH/RIM21</fullName>
    </recommendedName>
    <alternativeName>
        <fullName>Regulator of IME2 protein 21</fullName>
    </alternativeName>
</protein>
<gene>
    <name type="primary">RIM21</name>
    <name type="synonym">PAL2</name>
    <name type="ordered locus">YNL294C</name>
    <name type="ORF">N0466</name>
</gene>
<evidence type="ECO:0000250" key="1"/>
<evidence type="ECO:0000255" key="2"/>
<evidence type="ECO:0000256" key="3">
    <source>
        <dbReference type="SAM" id="MobiDB-lite"/>
    </source>
</evidence>
<evidence type="ECO:0000269" key="4">
    <source>
    </source>
</evidence>
<evidence type="ECO:0000305" key="5"/>
<evidence type="ECO:0007744" key="6">
    <source>
    </source>
</evidence>
<reference key="1">
    <citation type="journal article" date="1995" name="Yeast">
        <title>Sequence analysis of a 30 kb DNA segment from yeast chromosome XIV carrying a ribosomal protein gene cluster, the genes encoding a plasma membrane protein and a subunit of replication factor C, and a novel putative serine/threonine protein kinase gene.</title>
        <authorList>
            <person name="Maurer K.C.T."/>
            <person name="Urbanus J.H.M."/>
            <person name="Planta R.J."/>
        </authorList>
    </citation>
    <scope>NUCLEOTIDE SEQUENCE [GENOMIC DNA]</scope>
    <source>
        <strain>ATCC 96604 / S288c / FY1679</strain>
    </source>
</reference>
<reference key="2">
    <citation type="journal article" date="1997" name="Nature">
        <title>The nucleotide sequence of Saccharomyces cerevisiae chromosome XIV and its evolutionary implications.</title>
        <authorList>
            <person name="Philippsen P."/>
            <person name="Kleine K."/>
            <person name="Poehlmann R."/>
            <person name="Duesterhoeft A."/>
            <person name="Hamberg K."/>
            <person name="Hegemann J.H."/>
            <person name="Obermaier B."/>
            <person name="Urrestarazu L.A."/>
            <person name="Aert R."/>
            <person name="Albermann K."/>
            <person name="Altmann R."/>
            <person name="Andre B."/>
            <person name="Baladron V."/>
            <person name="Ballesta J.P.G."/>
            <person name="Becam A.-M."/>
            <person name="Beinhauer J.D."/>
            <person name="Boskovic J."/>
            <person name="Buitrago M.J."/>
            <person name="Bussereau F."/>
            <person name="Coster F."/>
            <person name="Crouzet M."/>
            <person name="D'Angelo M."/>
            <person name="Dal Pero F."/>
            <person name="De Antoni A."/>
            <person name="del Rey F."/>
            <person name="Doignon F."/>
            <person name="Domdey H."/>
            <person name="Dubois E."/>
            <person name="Fiedler T.A."/>
            <person name="Fleig U."/>
            <person name="Floeth M."/>
            <person name="Fritz C."/>
            <person name="Gaillardin C."/>
            <person name="Garcia-Cantalejo J.M."/>
            <person name="Glansdorff N."/>
            <person name="Goffeau A."/>
            <person name="Gueldener U."/>
            <person name="Herbert C.J."/>
            <person name="Heumann K."/>
            <person name="Heuss-Neitzel D."/>
            <person name="Hilbert H."/>
            <person name="Hinni K."/>
            <person name="Iraqui Houssaini I."/>
            <person name="Jacquet M."/>
            <person name="Jimenez A."/>
            <person name="Jonniaux J.-L."/>
            <person name="Karpfinger-Hartl L."/>
            <person name="Lanfranchi G."/>
            <person name="Lepingle A."/>
            <person name="Levesque H."/>
            <person name="Lyck R."/>
            <person name="Maftahi M."/>
            <person name="Mallet L."/>
            <person name="Maurer C.T.C."/>
            <person name="Messenguy F."/>
            <person name="Mewes H.-W."/>
            <person name="Moestl D."/>
            <person name="Nasr F."/>
            <person name="Nicaud J.-M."/>
            <person name="Niedenthal R.K."/>
            <person name="Pandolfo D."/>
            <person name="Pierard A."/>
            <person name="Piravandi E."/>
            <person name="Planta R.J."/>
            <person name="Pohl T.M."/>
            <person name="Purnelle B."/>
            <person name="Rebischung C."/>
            <person name="Remacha M.A."/>
            <person name="Revuelta J.L."/>
            <person name="Rinke M."/>
            <person name="Saiz J.E."/>
            <person name="Sartorello F."/>
            <person name="Scherens B."/>
            <person name="Sen-Gupta M."/>
            <person name="Soler-Mira A."/>
            <person name="Urbanus J.H.M."/>
            <person name="Valle G."/>
            <person name="Van Dyck L."/>
            <person name="Verhasselt P."/>
            <person name="Vierendeels F."/>
            <person name="Vissers S."/>
            <person name="Voet M."/>
            <person name="Volckaert G."/>
            <person name="Wach A."/>
            <person name="Wambutt R."/>
            <person name="Wedler H."/>
            <person name="Zollner A."/>
            <person name="Hani J."/>
        </authorList>
    </citation>
    <scope>NUCLEOTIDE SEQUENCE [LARGE SCALE GENOMIC DNA]</scope>
    <source>
        <strain>ATCC 204508 / S288c</strain>
    </source>
</reference>
<reference key="3">
    <citation type="journal article" date="2014" name="G3 (Bethesda)">
        <title>The reference genome sequence of Saccharomyces cerevisiae: Then and now.</title>
        <authorList>
            <person name="Engel S.R."/>
            <person name="Dietrich F.S."/>
            <person name="Fisk D.G."/>
            <person name="Binkley G."/>
            <person name="Balakrishnan R."/>
            <person name="Costanzo M.C."/>
            <person name="Dwight S.S."/>
            <person name="Hitz B.C."/>
            <person name="Karra K."/>
            <person name="Nash R.S."/>
            <person name="Weng S."/>
            <person name="Wong E.D."/>
            <person name="Lloyd P."/>
            <person name="Skrzypek M.S."/>
            <person name="Miyasato S.R."/>
            <person name="Simison M."/>
            <person name="Cherry J.M."/>
        </authorList>
    </citation>
    <scope>GENOME REANNOTATION</scope>
    <source>
        <strain>ATCC 204508 / S288c</strain>
    </source>
</reference>
<reference key="4">
    <citation type="journal article" date="2000" name="Mol. Gen. Genet.">
        <title>Ambient pH signalling in ascomycetous yeasts involves homologues of the Aspergillus nidulans genes palF and palH.</title>
        <authorList>
            <person name="Treton B."/>
            <person name="Blanchin-Roland S."/>
            <person name="Lambert M."/>
            <person name="Lepingle A."/>
            <person name="Gaillardin C."/>
        </authorList>
    </citation>
    <scope>FUNCTION</scope>
</reference>
<reference key="5">
    <citation type="journal article" date="2006" name="Proc. Natl. Acad. Sci. U.S.A.">
        <title>A global topology map of the Saccharomyces cerevisiae membrane proteome.</title>
        <authorList>
            <person name="Kim H."/>
            <person name="Melen K."/>
            <person name="Oesterberg M."/>
            <person name="von Heijne G."/>
        </authorList>
    </citation>
    <scope>TOPOLOGY [LARGE SCALE ANALYSIS]</scope>
    <source>
        <strain>ATCC 208353 / W303-1A</strain>
    </source>
</reference>
<reference key="6">
    <citation type="journal article" date="2008" name="Mol. Cell. Proteomics">
        <title>A multidimensional chromatography technology for in-depth phosphoproteome analysis.</title>
        <authorList>
            <person name="Albuquerque C.P."/>
            <person name="Smolka M.B."/>
            <person name="Payne S.H."/>
            <person name="Bafna V."/>
            <person name="Eng J."/>
            <person name="Zhou H."/>
        </authorList>
    </citation>
    <scope>PHOSPHORYLATION [LARGE SCALE ANALYSIS] AT SER-409</scope>
    <scope>IDENTIFICATION BY MASS SPECTROMETRY [LARGE SCALE ANALYSIS]</scope>
</reference>
<accession>P48565</accession>
<accession>D6W0P9</accession>
<organism>
    <name type="scientific">Saccharomyces cerevisiae (strain ATCC 204508 / S288c)</name>
    <name type="common">Baker's yeast</name>
    <dbReference type="NCBI Taxonomy" id="559292"/>
    <lineage>
        <taxon>Eukaryota</taxon>
        <taxon>Fungi</taxon>
        <taxon>Dikarya</taxon>
        <taxon>Ascomycota</taxon>
        <taxon>Saccharomycotina</taxon>
        <taxon>Saccharomycetes</taxon>
        <taxon>Saccharomycetales</taxon>
        <taxon>Saccharomycetaceae</taxon>
        <taxon>Saccharomyces</taxon>
    </lineage>
</organism>
<sequence>MNLWRHSPEELAAYNSCHPMKLGSGVLIQLPLYDNSAVYAEDITFRSFCCERVPVYVSTVLRNSSPYRYLDEVINDWQKFIQVSDYVGGSAEYAIYAVILSITSNFVITVFLTVICCINISGRAYKRILQLLRIASLLASLNLTIFITKVLRRLEKEHNVYGVVRAHSIMHIFSDDMTFVVLDFLATLMFQFCQVGIVIRLFQRAQEKRIIFFIGVILTITANILWVIPPFANHTTKHRNDWQILRPFVYLFRIAIATSYASIVIYHIWQKKKLWFKFNQMGLLTLLTILVVLLLPGFFLADVSNLWISELGEVFNTTCYVTSTVITWEWLDRLNVLERKEEAQSILGRPIFEEEQQDYRFAKYALRVQNALTRRESQDASTDRHDTSSNSEVCDLQTISRYDPEDQISVGRSIDRMHFNDRGTYKDVALKKLGYARDKILYFTDQIVQKSVGHNNSSSSKNEKTKQRKAMVRKRLGLDKPGIYIYSTKDVVFNSDEDDDENAEDEDDDEYEVGSEGNNNSSATFTSDHIGHI</sequence>
<name>PALH_YEAST</name>
<dbReference type="EMBL" id="U23084">
    <property type="protein sequence ID" value="AAC49105.1"/>
    <property type="molecule type" value="Genomic_DNA"/>
</dbReference>
<dbReference type="EMBL" id="Z71570">
    <property type="protein sequence ID" value="CAA96212.1"/>
    <property type="molecule type" value="Genomic_DNA"/>
</dbReference>
<dbReference type="EMBL" id="BK006947">
    <property type="protein sequence ID" value="DAA10265.1"/>
    <property type="molecule type" value="Genomic_DNA"/>
</dbReference>
<dbReference type="PIR" id="S63270">
    <property type="entry name" value="S63270"/>
</dbReference>
<dbReference type="RefSeq" id="NP_014105.1">
    <property type="nucleotide sequence ID" value="NM_001183132.1"/>
</dbReference>
<dbReference type="BioGRID" id="35543">
    <property type="interactions" value="402"/>
</dbReference>
<dbReference type="FunCoup" id="P48565">
    <property type="interactions" value="82"/>
</dbReference>
<dbReference type="MINT" id="P48565"/>
<dbReference type="STRING" id="4932.YNL294C"/>
<dbReference type="TCDB" id="9.B.213.1.1">
    <property type="family name" value="the 7 tms ph sensor rim21/palh (rim21/palh) family"/>
</dbReference>
<dbReference type="iPTMnet" id="P48565"/>
<dbReference type="PaxDb" id="4932-YNL294C"/>
<dbReference type="PeptideAtlas" id="P48565"/>
<dbReference type="EnsemblFungi" id="YNL294C_mRNA">
    <property type="protein sequence ID" value="YNL294C"/>
    <property type="gene ID" value="YNL294C"/>
</dbReference>
<dbReference type="GeneID" id="855422"/>
<dbReference type="KEGG" id="sce:YNL294C"/>
<dbReference type="AGR" id="SGD:S000005238"/>
<dbReference type="SGD" id="S000005238">
    <property type="gene designation" value="RIM21"/>
</dbReference>
<dbReference type="VEuPathDB" id="FungiDB:YNL294C"/>
<dbReference type="eggNOG" id="ENOG502QWMT">
    <property type="taxonomic scope" value="Eukaryota"/>
</dbReference>
<dbReference type="HOGENOM" id="CLU_026111_0_0_1"/>
<dbReference type="InParanoid" id="P48565"/>
<dbReference type="OMA" id="CVVIPWE"/>
<dbReference type="OrthoDB" id="5393256at2759"/>
<dbReference type="BioCyc" id="YEAST:G3O-33283-MONOMER"/>
<dbReference type="BioGRID-ORCS" id="855422">
    <property type="hits" value="0 hits in 10 CRISPR screens"/>
</dbReference>
<dbReference type="PRO" id="PR:P48565"/>
<dbReference type="Proteomes" id="UP000002311">
    <property type="component" value="Chromosome XIV"/>
</dbReference>
<dbReference type="RNAct" id="P48565">
    <property type="molecule type" value="protein"/>
</dbReference>
<dbReference type="GO" id="GO:0005783">
    <property type="term" value="C:endoplasmic reticulum"/>
    <property type="evidence" value="ECO:0007005"/>
    <property type="project" value="SGD"/>
</dbReference>
<dbReference type="GO" id="GO:0005886">
    <property type="term" value="C:plasma membrane"/>
    <property type="evidence" value="ECO:0000314"/>
    <property type="project" value="SGD"/>
</dbReference>
<dbReference type="GO" id="GO:0030437">
    <property type="term" value="P:ascospore formation"/>
    <property type="evidence" value="ECO:0000315"/>
    <property type="project" value="SGD"/>
</dbReference>
<dbReference type="GO" id="GO:0071469">
    <property type="term" value="P:cellular response to alkaline pH"/>
    <property type="evidence" value="ECO:0000315"/>
    <property type="project" value="SGD"/>
</dbReference>
<dbReference type="GO" id="GO:0071467">
    <property type="term" value="P:cellular response to pH"/>
    <property type="evidence" value="ECO:0000318"/>
    <property type="project" value="GO_Central"/>
</dbReference>
<dbReference type="GO" id="GO:0009272">
    <property type="term" value="P:fungal-type cell wall biogenesis"/>
    <property type="evidence" value="ECO:0000315"/>
    <property type="project" value="SGD"/>
</dbReference>
<dbReference type="GO" id="GO:0001403">
    <property type="term" value="P:invasive growth in response to glucose limitation"/>
    <property type="evidence" value="ECO:0000315"/>
    <property type="project" value="SGD"/>
</dbReference>
<dbReference type="GO" id="GO:0044088">
    <property type="term" value="P:regulation of vacuole organization"/>
    <property type="evidence" value="ECO:0000316"/>
    <property type="project" value="SGD"/>
</dbReference>
<dbReference type="InterPro" id="IPR014844">
    <property type="entry name" value="PalH"/>
</dbReference>
<dbReference type="PANTHER" id="PTHR35779">
    <property type="entry name" value="PH-RESPONSE REGULATOR PROTEIN PALH/RIM21"/>
    <property type="match status" value="1"/>
</dbReference>
<dbReference type="PANTHER" id="PTHR35779:SF1">
    <property type="entry name" value="PH-RESPONSE REGULATOR PROTEIN PALH_RIM21"/>
    <property type="match status" value="1"/>
</dbReference>
<dbReference type="Pfam" id="PF08733">
    <property type="entry name" value="PalH"/>
    <property type="match status" value="1"/>
</dbReference>
<feature type="chain" id="PRO_0000058205" description="pH-response regulator protein palH/RIM21">
    <location>
        <begin position="1"/>
        <end position="533"/>
    </location>
</feature>
<feature type="topological domain" description="Extracellular" evidence="2">
    <location>
        <begin position="1"/>
        <end position="94"/>
    </location>
</feature>
<feature type="transmembrane region" description="Helical" evidence="2">
    <location>
        <begin position="95"/>
        <end position="115"/>
    </location>
</feature>
<feature type="topological domain" description="Cytoplasmic" evidence="2">
    <location>
        <begin position="116"/>
        <end position="127"/>
    </location>
</feature>
<feature type="transmembrane region" description="Helical" evidence="2">
    <location>
        <begin position="128"/>
        <end position="148"/>
    </location>
</feature>
<feature type="topological domain" description="Extracellular" evidence="2">
    <location>
        <begin position="149"/>
        <end position="178"/>
    </location>
</feature>
<feature type="transmembrane region" description="Helical" evidence="2">
    <location>
        <begin position="179"/>
        <end position="199"/>
    </location>
</feature>
<feature type="topological domain" description="Cytoplasmic" evidence="2">
    <location>
        <begin position="200"/>
        <end position="209"/>
    </location>
</feature>
<feature type="transmembrane region" description="Helical" evidence="2">
    <location>
        <begin position="210"/>
        <end position="230"/>
    </location>
</feature>
<feature type="topological domain" description="Extracellular" evidence="2">
    <location>
        <begin position="231"/>
        <end position="247"/>
    </location>
</feature>
<feature type="transmembrane region" description="Helical" evidence="2">
    <location>
        <begin position="248"/>
        <end position="268"/>
    </location>
</feature>
<feature type="topological domain" description="Cytoplasmic" evidence="2">
    <location>
        <begin position="269"/>
        <end position="280"/>
    </location>
</feature>
<feature type="transmembrane region" description="Helical" evidence="2">
    <location>
        <begin position="281"/>
        <end position="301"/>
    </location>
</feature>
<feature type="topological domain" description="Extracellular" evidence="2">
    <location>
        <begin position="302"/>
        <end position="307"/>
    </location>
</feature>
<feature type="transmembrane region" description="Helical" evidence="2">
    <location>
        <begin position="308"/>
        <end position="328"/>
    </location>
</feature>
<feature type="topological domain" description="Cytoplasmic" evidence="2">
    <location>
        <begin position="329"/>
        <end position="533"/>
    </location>
</feature>
<feature type="region of interest" description="Disordered" evidence="3">
    <location>
        <begin position="452"/>
        <end position="473"/>
    </location>
</feature>
<feature type="region of interest" description="Disordered" evidence="3">
    <location>
        <begin position="494"/>
        <end position="533"/>
    </location>
</feature>
<feature type="compositionally biased region" description="Acidic residues" evidence="3">
    <location>
        <begin position="495"/>
        <end position="513"/>
    </location>
</feature>
<feature type="compositionally biased region" description="Polar residues" evidence="3">
    <location>
        <begin position="516"/>
        <end position="527"/>
    </location>
</feature>
<feature type="modified residue" description="Phosphoserine" evidence="6">
    <location>
        <position position="409"/>
    </location>
</feature>